<evidence type="ECO:0000250" key="1"/>
<evidence type="ECO:0000269" key="2">
    <source>
    </source>
</evidence>
<evidence type="ECO:0000305" key="3"/>
<sequence length="178" mass="20824">MATIRIHDEANTTIENQEEVASFLDSQEVIYEQWDITRLPEHLSEKYDLTEEEKQQILDTFETEIKDISTRRGYKAQDVISLSDSNPKLDELLENFKREHHHTDDEVRFIVSGHGIFVIQGQDGTFFDVRLNPGDLISVPENIRHYFTLQEDRKVVAVRIFVTTEGWVPIYEKDSVNQ</sequence>
<name>MTND_BACSU</name>
<comment type="function">
    <text evidence="2">Catalyzes 2 different reactions between oxygen and the acireductone 1,2-dihydroxy-3-keto-5-methylthiopentene (DHK-MTPene) depending upon the metal bound in the active site. Fe-containing acireductone dioxygenase (Fe-ARD) produces formate and 2-keto-4-methylthiobutyrate (KMTB), the alpha-ketoacid precursor of methionine in the methionine recycle pathway. Ni-containing acireductone dioxygenase (Ni-ARD) produces methylthiopropionate, carbon monoxide and formate, and does not lie on the methionine recycle pathway.</text>
</comment>
<comment type="catalytic activity">
    <reaction>
        <text>1,2-dihydroxy-5-(methylsulfanyl)pent-1-en-3-one + O2 = 3-(methylsulfanyl)propanoate + CO + formate + 2 H(+)</text>
        <dbReference type="Rhea" id="RHEA:14161"/>
        <dbReference type="ChEBI" id="CHEBI:15378"/>
        <dbReference type="ChEBI" id="CHEBI:15379"/>
        <dbReference type="ChEBI" id="CHEBI:15740"/>
        <dbReference type="ChEBI" id="CHEBI:17245"/>
        <dbReference type="ChEBI" id="CHEBI:49016"/>
        <dbReference type="ChEBI" id="CHEBI:49252"/>
        <dbReference type="EC" id="1.13.11.53"/>
    </reaction>
</comment>
<comment type="catalytic activity">
    <reaction>
        <text>1,2-dihydroxy-5-(methylsulfanyl)pent-1-en-3-one + O2 = 4-methylsulfanyl-2-oxobutanoate + formate + 2 H(+)</text>
        <dbReference type="Rhea" id="RHEA:24504"/>
        <dbReference type="ChEBI" id="CHEBI:15378"/>
        <dbReference type="ChEBI" id="CHEBI:15379"/>
        <dbReference type="ChEBI" id="CHEBI:15740"/>
        <dbReference type="ChEBI" id="CHEBI:16723"/>
        <dbReference type="ChEBI" id="CHEBI:49252"/>
        <dbReference type="EC" id="1.13.11.54"/>
    </reaction>
</comment>
<comment type="cofactor">
    <cofactor evidence="3">
        <name>Fe(2+)</name>
        <dbReference type="ChEBI" id="CHEBI:29033"/>
    </cofactor>
    <text evidence="3">Binds 1 Fe(2+) cation per monomer.</text>
</comment>
<comment type="cofactor">
    <cofactor evidence="3">
        <name>Ni(2+)</name>
        <dbReference type="ChEBI" id="CHEBI:49786"/>
    </cofactor>
    <text evidence="3">Binds 1 nickel ion per monomer.</text>
</comment>
<comment type="pathway">
    <text>Amino-acid biosynthesis; L-methionine biosynthesis via salvage pathway; L-methionine from S-methyl-5-thio-alpha-D-ribose 1-phosphate: step 5/6.</text>
</comment>
<comment type="subunit">
    <text evidence="1">Monomer.</text>
</comment>
<comment type="similarity">
    <text evidence="3">Belongs to the acireductone dioxygenase (ARD) family.</text>
</comment>
<keyword id="KW-0028">Amino-acid biosynthesis</keyword>
<keyword id="KW-0223">Dioxygenase</keyword>
<keyword id="KW-0408">Iron</keyword>
<keyword id="KW-0479">Metal-binding</keyword>
<keyword id="KW-0486">Methionine biosynthesis</keyword>
<keyword id="KW-0533">Nickel</keyword>
<keyword id="KW-0560">Oxidoreductase</keyword>
<keyword id="KW-1185">Reference proteome</keyword>
<accession>O31669</accession>
<gene>
    <name type="primary">mtnD</name>
    <name type="synonym">ykrZ</name>
    <name type="ordered locus">BSU13620</name>
</gene>
<dbReference type="EC" id="1.13.11.54"/>
<dbReference type="EC" id="1.13.11.53"/>
<dbReference type="EMBL" id="AL009126">
    <property type="protein sequence ID" value="CAB13235.1"/>
    <property type="molecule type" value="Genomic_DNA"/>
</dbReference>
<dbReference type="PIR" id="B69864">
    <property type="entry name" value="B69864"/>
</dbReference>
<dbReference type="RefSeq" id="NP_389245.1">
    <property type="nucleotide sequence ID" value="NC_000964.3"/>
</dbReference>
<dbReference type="RefSeq" id="WP_003244952.1">
    <property type="nucleotide sequence ID" value="NZ_OZ025638.1"/>
</dbReference>
<dbReference type="SMR" id="O31669"/>
<dbReference type="FunCoup" id="O31669">
    <property type="interactions" value="239"/>
</dbReference>
<dbReference type="IntAct" id="O31669">
    <property type="interactions" value="1"/>
</dbReference>
<dbReference type="MINT" id="O31669"/>
<dbReference type="STRING" id="224308.BSU13620"/>
<dbReference type="PaxDb" id="224308-BSU13620"/>
<dbReference type="EnsemblBacteria" id="CAB13235">
    <property type="protein sequence ID" value="CAB13235"/>
    <property type="gene ID" value="BSU_13620"/>
</dbReference>
<dbReference type="GeneID" id="939322"/>
<dbReference type="KEGG" id="bsu:BSU13620"/>
<dbReference type="PATRIC" id="fig|224308.179.peg.1479"/>
<dbReference type="eggNOG" id="COG1791">
    <property type="taxonomic scope" value="Bacteria"/>
</dbReference>
<dbReference type="InParanoid" id="O31669"/>
<dbReference type="OrthoDB" id="9795636at2"/>
<dbReference type="PhylomeDB" id="O31669"/>
<dbReference type="BioCyc" id="BSUB:BSU13620-MONOMER"/>
<dbReference type="UniPathway" id="UPA00904">
    <property type="reaction ID" value="UER00878"/>
</dbReference>
<dbReference type="Proteomes" id="UP000001570">
    <property type="component" value="Chromosome"/>
</dbReference>
<dbReference type="GO" id="GO:0010308">
    <property type="term" value="F:acireductone dioxygenase (Ni2+-requiring) activity"/>
    <property type="evidence" value="ECO:0007669"/>
    <property type="project" value="UniProtKB-UniRule"/>
</dbReference>
<dbReference type="GO" id="GO:0010309">
    <property type="term" value="F:acireductone dioxygenase [iron(II)-requiring] activity"/>
    <property type="evidence" value="ECO:0000318"/>
    <property type="project" value="GO_Central"/>
</dbReference>
<dbReference type="GO" id="GO:0005506">
    <property type="term" value="F:iron ion binding"/>
    <property type="evidence" value="ECO:0007669"/>
    <property type="project" value="UniProtKB-UniRule"/>
</dbReference>
<dbReference type="GO" id="GO:0016151">
    <property type="term" value="F:nickel cation binding"/>
    <property type="evidence" value="ECO:0007669"/>
    <property type="project" value="UniProtKB-UniRule"/>
</dbReference>
<dbReference type="GO" id="GO:0019509">
    <property type="term" value="P:L-methionine salvage from methylthioadenosine"/>
    <property type="evidence" value="ECO:0007669"/>
    <property type="project" value="UniProtKB-UniRule"/>
</dbReference>
<dbReference type="GO" id="GO:0019284">
    <property type="term" value="P:L-methionine salvage from S-adenosylmethionine"/>
    <property type="evidence" value="ECO:0007669"/>
    <property type="project" value="InterPro"/>
</dbReference>
<dbReference type="GO" id="GO:0006555">
    <property type="term" value="P:methionine metabolic process"/>
    <property type="evidence" value="ECO:0000318"/>
    <property type="project" value="GO_Central"/>
</dbReference>
<dbReference type="CDD" id="cd02232">
    <property type="entry name" value="cupin_ARD"/>
    <property type="match status" value="1"/>
</dbReference>
<dbReference type="FunFam" id="2.60.120.10:FF:000056">
    <property type="entry name" value="Acireductone dioxygenase"/>
    <property type="match status" value="1"/>
</dbReference>
<dbReference type="Gene3D" id="2.60.120.10">
    <property type="entry name" value="Jelly Rolls"/>
    <property type="match status" value="1"/>
</dbReference>
<dbReference type="HAMAP" id="MF_01682">
    <property type="entry name" value="Salvage_MtnD"/>
    <property type="match status" value="1"/>
</dbReference>
<dbReference type="InterPro" id="IPR004313">
    <property type="entry name" value="ARD"/>
</dbReference>
<dbReference type="InterPro" id="IPR023956">
    <property type="entry name" value="ARD_bac"/>
</dbReference>
<dbReference type="InterPro" id="IPR014710">
    <property type="entry name" value="RmlC-like_jellyroll"/>
</dbReference>
<dbReference type="InterPro" id="IPR011051">
    <property type="entry name" value="RmlC_Cupin_sf"/>
</dbReference>
<dbReference type="PANTHER" id="PTHR23418">
    <property type="entry name" value="ACIREDUCTONE DIOXYGENASE"/>
    <property type="match status" value="1"/>
</dbReference>
<dbReference type="PANTHER" id="PTHR23418:SF0">
    <property type="entry name" value="ACIREDUCTONE DIOXYGENASE"/>
    <property type="match status" value="1"/>
</dbReference>
<dbReference type="Pfam" id="PF03079">
    <property type="entry name" value="ARD"/>
    <property type="match status" value="1"/>
</dbReference>
<dbReference type="SUPFAM" id="SSF51182">
    <property type="entry name" value="RmlC-like cupins"/>
    <property type="match status" value="1"/>
</dbReference>
<protein>
    <recommendedName>
        <fullName>Acireductone dioxygenase</fullName>
    </recommendedName>
    <alternativeName>
        <fullName>1,2-dihydroxy-3-keto-5-methylthiopentene dioxygenase</fullName>
        <shortName>DHK-MTPene dioxygenase</shortName>
    </alternativeName>
    <alternativeName>
        <fullName>Acireductone dioxygenase (Fe(2+)-requiring)</fullName>
        <shortName>ARD'</shortName>
        <shortName>Fe-ARD</shortName>
        <ecNumber>1.13.11.54</ecNumber>
    </alternativeName>
    <alternativeName>
        <fullName>Acireductone dioxygenase (Ni(2+)-requiring)</fullName>
        <shortName>ARD</shortName>
        <shortName>Ni-ARD</shortName>
        <ecNumber>1.13.11.53</ecNumber>
    </alternativeName>
</protein>
<feature type="chain" id="PRO_0000162941" description="Acireductone dioxygenase">
    <location>
        <begin position="1"/>
        <end position="178"/>
    </location>
</feature>
<feature type="binding site" evidence="1">
    <location>
        <position position="100"/>
    </location>
    <ligand>
        <name>Fe(2+)</name>
        <dbReference type="ChEBI" id="CHEBI:29033"/>
    </ligand>
</feature>
<feature type="binding site" evidence="1">
    <location>
        <position position="100"/>
    </location>
    <ligand>
        <name>Ni(2+)</name>
        <dbReference type="ChEBI" id="CHEBI:49786"/>
    </ligand>
</feature>
<feature type="binding site" evidence="1">
    <location>
        <position position="102"/>
    </location>
    <ligand>
        <name>Fe(2+)</name>
        <dbReference type="ChEBI" id="CHEBI:29033"/>
    </ligand>
</feature>
<feature type="binding site" evidence="1">
    <location>
        <position position="102"/>
    </location>
    <ligand>
        <name>Ni(2+)</name>
        <dbReference type="ChEBI" id="CHEBI:49786"/>
    </ligand>
</feature>
<feature type="binding site" evidence="1">
    <location>
        <position position="106"/>
    </location>
    <ligand>
        <name>Fe(2+)</name>
        <dbReference type="ChEBI" id="CHEBI:29033"/>
    </ligand>
</feature>
<feature type="binding site" evidence="1">
    <location>
        <position position="106"/>
    </location>
    <ligand>
        <name>Ni(2+)</name>
        <dbReference type="ChEBI" id="CHEBI:49786"/>
    </ligand>
</feature>
<feature type="binding site" evidence="1">
    <location>
        <position position="145"/>
    </location>
    <ligand>
        <name>Fe(2+)</name>
        <dbReference type="ChEBI" id="CHEBI:29033"/>
    </ligand>
</feature>
<feature type="binding site" evidence="1">
    <location>
        <position position="145"/>
    </location>
    <ligand>
        <name>Ni(2+)</name>
        <dbReference type="ChEBI" id="CHEBI:49786"/>
    </ligand>
</feature>
<feature type="site" description="May play a role in metal incorporation in vivo" evidence="1">
    <location>
        <position position="99"/>
    </location>
</feature>
<feature type="site" description="May play a role in transmitting local conformational changes" evidence="1">
    <location>
        <position position="105"/>
    </location>
</feature>
<feature type="site" description="Important to generate the dianion" evidence="1">
    <location>
        <position position="108"/>
    </location>
</feature>
<reference key="1">
    <citation type="journal article" date="1997" name="Nature">
        <title>The complete genome sequence of the Gram-positive bacterium Bacillus subtilis.</title>
        <authorList>
            <person name="Kunst F."/>
            <person name="Ogasawara N."/>
            <person name="Moszer I."/>
            <person name="Albertini A.M."/>
            <person name="Alloni G."/>
            <person name="Azevedo V."/>
            <person name="Bertero M.G."/>
            <person name="Bessieres P."/>
            <person name="Bolotin A."/>
            <person name="Borchert S."/>
            <person name="Borriss R."/>
            <person name="Boursier L."/>
            <person name="Brans A."/>
            <person name="Braun M."/>
            <person name="Brignell S.C."/>
            <person name="Bron S."/>
            <person name="Brouillet S."/>
            <person name="Bruschi C.V."/>
            <person name="Caldwell B."/>
            <person name="Capuano V."/>
            <person name="Carter N.M."/>
            <person name="Choi S.-K."/>
            <person name="Codani J.-J."/>
            <person name="Connerton I.F."/>
            <person name="Cummings N.J."/>
            <person name="Daniel R.A."/>
            <person name="Denizot F."/>
            <person name="Devine K.M."/>
            <person name="Duesterhoeft A."/>
            <person name="Ehrlich S.D."/>
            <person name="Emmerson P.T."/>
            <person name="Entian K.-D."/>
            <person name="Errington J."/>
            <person name="Fabret C."/>
            <person name="Ferrari E."/>
            <person name="Foulger D."/>
            <person name="Fritz C."/>
            <person name="Fujita M."/>
            <person name="Fujita Y."/>
            <person name="Fuma S."/>
            <person name="Galizzi A."/>
            <person name="Galleron N."/>
            <person name="Ghim S.-Y."/>
            <person name="Glaser P."/>
            <person name="Goffeau A."/>
            <person name="Golightly E.J."/>
            <person name="Grandi G."/>
            <person name="Guiseppi G."/>
            <person name="Guy B.J."/>
            <person name="Haga K."/>
            <person name="Haiech J."/>
            <person name="Harwood C.R."/>
            <person name="Henaut A."/>
            <person name="Hilbert H."/>
            <person name="Holsappel S."/>
            <person name="Hosono S."/>
            <person name="Hullo M.-F."/>
            <person name="Itaya M."/>
            <person name="Jones L.-M."/>
            <person name="Joris B."/>
            <person name="Karamata D."/>
            <person name="Kasahara Y."/>
            <person name="Klaerr-Blanchard M."/>
            <person name="Klein C."/>
            <person name="Kobayashi Y."/>
            <person name="Koetter P."/>
            <person name="Koningstein G."/>
            <person name="Krogh S."/>
            <person name="Kumano M."/>
            <person name="Kurita K."/>
            <person name="Lapidus A."/>
            <person name="Lardinois S."/>
            <person name="Lauber J."/>
            <person name="Lazarevic V."/>
            <person name="Lee S.-M."/>
            <person name="Levine A."/>
            <person name="Liu H."/>
            <person name="Masuda S."/>
            <person name="Mauel C."/>
            <person name="Medigue C."/>
            <person name="Medina N."/>
            <person name="Mellado R.P."/>
            <person name="Mizuno M."/>
            <person name="Moestl D."/>
            <person name="Nakai S."/>
            <person name="Noback M."/>
            <person name="Noone D."/>
            <person name="O'Reilly M."/>
            <person name="Ogawa K."/>
            <person name="Ogiwara A."/>
            <person name="Oudega B."/>
            <person name="Park S.-H."/>
            <person name="Parro V."/>
            <person name="Pohl T.M."/>
            <person name="Portetelle D."/>
            <person name="Porwollik S."/>
            <person name="Prescott A.M."/>
            <person name="Presecan E."/>
            <person name="Pujic P."/>
            <person name="Purnelle B."/>
            <person name="Rapoport G."/>
            <person name="Rey M."/>
            <person name="Reynolds S."/>
            <person name="Rieger M."/>
            <person name="Rivolta C."/>
            <person name="Rocha E."/>
            <person name="Roche B."/>
            <person name="Rose M."/>
            <person name="Sadaie Y."/>
            <person name="Sato T."/>
            <person name="Scanlan E."/>
            <person name="Schleich S."/>
            <person name="Schroeter R."/>
            <person name="Scoffone F."/>
            <person name="Sekiguchi J."/>
            <person name="Sekowska A."/>
            <person name="Seror S.J."/>
            <person name="Serror P."/>
            <person name="Shin B.-S."/>
            <person name="Soldo B."/>
            <person name="Sorokin A."/>
            <person name="Tacconi E."/>
            <person name="Takagi T."/>
            <person name="Takahashi H."/>
            <person name="Takemaru K."/>
            <person name="Takeuchi M."/>
            <person name="Tamakoshi A."/>
            <person name="Tanaka T."/>
            <person name="Terpstra P."/>
            <person name="Tognoni A."/>
            <person name="Tosato V."/>
            <person name="Uchiyama S."/>
            <person name="Vandenbol M."/>
            <person name="Vannier F."/>
            <person name="Vassarotti A."/>
            <person name="Viari A."/>
            <person name="Wambutt R."/>
            <person name="Wedler E."/>
            <person name="Wedler H."/>
            <person name="Weitzenegger T."/>
            <person name="Winters P."/>
            <person name="Wipat A."/>
            <person name="Yamamoto H."/>
            <person name="Yamane K."/>
            <person name="Yasumoto K."/>
            <person name="Yata K."/>
            <person name="Yoshida K."/>
            <person name="Yoshikawa H.-F."/>
            <person name="Zumstein E."/>
            <person name="Yoshikawa H."/>
            <person name="Danchin A."/>
        </authorList>
    </citation>
    <scope>NUCLEOTIDE SEQUENCE [LARGE SCALE GENOMIC DNA]</scope>
    <source>
        <strain>168</strain>
    </source>
</reference>
<reference key="2">
    <citation type="journal article" date="2002" name="BMC Microbiol.">
        <title>The methionine salvage pathway in Bacillus subtilis.</title>
        <authorList>
            <person name="Sekowska A."/>
            <person name="Danchin A."/>
        </authorList>
    </citation>
    <scope>REVIEW</scope>
</reference>
<reference key="3">
    <citation type="journal article" date="2003" name="Science">
        <title>A functional link between RuBisCO-like protein of Bacillus and photosynthetic RuBisCO.</title>
        <authorList>
            <person name="Ashida H."/>
            <person name="Saito Y."/>
            <person name="Kojima C."/>
            <person name="Kobayashi K."/>
            <person name="Ogasawara N."/>
            <person name="Yokota A."/>
        </authorList>
    </citation>
    <scope>FUNCTION</scope>
</reference>
<reference key="4">
    <citation type="journal article" date="2004" name="BMC Microbiol.">
        <title>Bacterial variations on the methionine salvage pathway.</title>
        <authorList>
            <person name="Sekowska A."/>
            <person name="Denervaud V."/>
            <person name="Ashida H."/>
            <person name="Michoud K."/>
            <person name="Haas D."/>
            <person name="Yokota A."/>
            <person name="Danchin A."/>
        </authorList>
    </citation>
    <scope>NOMENCLATURE</scope>
</reference>
<organism>
    <name type="scientific">Bacillus subtilis (strain 168)</name>
    <dbReference type="NCBI Taxonomy" id="224308"/>
    <lineage>
        <taxon>Bacteria</taxon>
        <taxon>Bacillati</taxon>
        <taxon>Bacillota</taxon>
        <taxon>Bacilli</taxon>
        <taxon>Bacillales</taxon>
        <taxon>Bacillaceae</taxon>
        <taxon>Bacillus</taxon>
    </lineage>
</organism>
<proteinExistence type="inferred from homology"/>